<accession>Q9ULR5</accession>
<reference key="1">
    <citation type="journal article" date="1999" name="DNA Res.">
        <title>Characterization of cDNA clones selected by the GeneMark analysis from size-fractionated cDNA libraries from human brain.</title>
        <authorList>
            <person name="Hirosawa M."/>
            <person name="Nagase T."/>
            <person name="Ishikawa K."/>
            <person name="Kikuno R."/>
            <person name="Nomura N."/>
            <person name="Ohara O."/>
        </authorList>
    </citation>
    <scope>NUCLEOTIDE SEQUENCE [LARGE SCALE MRNA]</scope>
    <source>
        <tissue>Brain</tissue>
    </source>
</reference>
<reference key="2">
    <citation type="journal article" date="2006" name="RNA">
        <title>Regulation of poly(A) binding protein function in translation: Characterization of the Paip2 homolog, Paip2B.</title>
        <authorList>
            <person name="Berlanga J.J."/>
            <person name="Baass A."/>
            <person name="Sonenberg N."/>
        </authorList>
    </citation>
    <scope>FUNCTION</scope>
    <scope>INTERACTION WITH PABPC1</scope>
    <scope>TISSUE SPECIFICITY</scope>
    <scope>UBIQUITINATION</scope>
</reference>
<reference key="3">
    <citation type="journal article" date="2009" name="Anal. Chem.">
        <title>Lys-N and trypsin cover complementary parts of the phosphoproteome in a refined SCX-based approach.</title>
        <authorList>
            <person name="Gauci S."/>
            <person name="Helbig A.O."/>
            <person name="Slijper M."/>
            <person name="Krijgsveld J."/>
            <person name="Heck A.J."/>
            <person name="Mohammed S."/>
        </authorList>
    </citation>
    <scope>ACETYLATION [LARGE SCALE ANALYSIS] AT MET-1</scope>
    <scope>IDENTIFICATION BY MASS SPECTROMETRY [LARGE SCALE ANALYSIS]</scope>
</reference>
<keyword id="KW-0007">Acetylation</keyword>
<keyword id="KW-1267">Proteomics identification</keyword>
<keyword id="KW-1185">Reference proteome</keyword>
<keyword id="KW-0678">Repressor</keyword>
<keyword id="KW-0810">Translation regulation</keyword>
<keyword id="KW-0832">Ubl conjugation</keyword>
<comment type="function">
    <text evidence="2">Inhibits translation of capped and polyadenylated mRNAs by displacing PABPC1 from the poly(A) tail.</text>
</comment>
<comment type="subunit">
    <text evidence="2">Interacts (via central acidic portion and C-terminus) with PABPC1 (via the second and third RRM domains and the C-terminus).</text>
</comment>
<comment type="tissue specificity">
    <text evidence="2">Expressed in brain, cervix, heart, liver, ovary, kidney, prostate and testis.</text>
</comment>
<comment type="PTM">
    <text evidence="2">Ubiquitinated in vitro.</text>
</comment>
<comment type="similarity">
    <text evidence="3">Belongs to the PAIP2 family.</text>
</comment>
<comment type="sequence caution" evidence="3">
    <conflict type="erroneous initiation">
        <sequence resource="EMBL-CDS" id="BAA86469"/>
    </conflict>
</comment>
<protein>
    <recommendedName>
        <fullName>Polyadenylate-binding protein-interacting protein 2B</fullName>
        <shortName>PABP-interacting protein 2B</shortName>
        <shortName>PAIP-2B</shortName>
        <shortName>Poly(A)-binding protein-interacting protein 2B</shortName>
    </recommendedName>
</protein>
<name>PAI2B_HUMAN</name>
<feature type="chain" id="PRO_0000317294" description="Polyadenylate-binding protein-interacting protein 2B">
    <location>
        <begin position="1"/>
        <end position="123"/>
    </location>
</feature>
<feature type="region of interest" description="Disordered" evidence="1">
    <location>
        <begin position="1"/>
        <end position="30"/>
    </location>
</feature>
<feature type="region of interest" description="Disordered" evidence="1">
    <location>
        <begin position="91"/>
        <end position="123"/>
    </location>
</feature>
<feature type="compositionally biased region" description="Polar residues" evidence="1">
    <location>
        <begin position="1"/>
        <end position="13"/>
    </location>
</feature>
<feature type="compositionally biased region" description="Basic and acidic residues" evidence="1">
    <location>
        <begin position="14"/>
        <end position="30"/>
    </location>
</feature>
<feature type="compositionally biased region" description="Basic and acidic residues" evidence="1">
    <location>
        <begin position="113"/>
        <end position="123"/>
    </location>
</feature>
<feature type="modified residue" description="N-acetylmethionine" evidence="4">
    <location>
        <position position="1"/>
    </location>
</feature>
<evidence type="ECO:0000256" key="1">
    <source>
        <dbReference type="SAM" id="MobiDB-lite"/>
    </source>
</evidence>
<evidence type="ECO:0000269" key="2">
    <source>
    </source>
</evidence>
<evidence type="ECO:0000305" key="3"/>
<evidence type="ECO:0007744" key="4">
    <source>
    </source>
</evidence>
<gene>
    <name type="primary">PAIP2B</name>
    <name type="synonym">KIAA1155</name>
</gene>
<organism>
    <name type="scientific">Homo sapiens</name>
    <name type="common">Human</name>
    <dbReference type="NCBI Taxonomy" id="9606"/>
    <lineage>
        <taxon>Eukaryota</taxon>
        <taxon>Metazoa</taxon>
        <taxon>Chordata</taxon>
        <taxon>Craniata</taxon>
        <taxon>Vertebrata</taxon>
        <taxon>Euteleostomi</taxon>
        <taxon>Mammalia</taxon>
        <taxon>Eutheria</taxon>
        <taxon>Euarchontoglires</taxon>
        <taxon>Primates</taxon>
        <taxon>Haplorrhini</taxon>
        <taxon>Catarrhini</taxon>
        <taxon>Hominidae</taxon>
        <taxon>Homo</taxon>
    </lineage>
</organism>
<dbReference type="EMBL" id="AB032981">
    <property type="protein sequence ID" value="BAA86469.1"/>
    <property type="status" value="ALT_INIT"/>
    <property type="molecule type" value="mRNA"/>
</dbReference>
<dbReference type="CCDS" id="CCDS46322.1"/>
<dbReference type="RefSeq" id="NP_065192.1">
    <property type="nucleotide sequence ID" value="NM_020459.1"/>
</dbReference>
<dbReference type="RefSeq" id="XP_005264367.1">
    <property type="nucleotide sequence ID" value="XM_005264310.5"/>
</dbReference>
<dbReference type="RefSeq" id="XP_005264368.1">
    <property type="nucleotide sequence ID" value="XM_005264311.5"/>
</dbReference>
<dbReference type="RefSeq" id="XP_011531145.1">
    <property type="nucleotide sequence ID" value="XM_011532843.2"/>
</dbReference>
<dbReference type="RefSeq" id="XP_054198001.1">
    <property type="nucleotide sequence ID" value="XM_054342026.1"/>
</dbReference>
<dbReference type="RefSeq" id="XP_054198002.1">
    <property type="nucleotide sequence ID" value="XM_054342027.1"/>
</dbReference>
<dbReference type="BioGRID" id="134843">
    <property type="interactions" value="193"/>
</dbReference>
<dbReference type="ELM" id="Q9ULR5"/>
<dbReference type="FunCoup" id="Q9ULR5">
    <property type="interactions" value="902"/>
</dbReference>
<dbReference type="IntAct" id="Q9ULR5">
    <property type="interactions" value="48"/>
</dbReference>
<dbReference type="STRING" id="9606.ENSP00000244221"/>
<dbReference type="iPTMnet" id="Q9ULR5"/>
<dbReference type="PhosphoSitePlus" id="Q9ULR5"/>
<dbReference type="BioMuta" id="PAIP2B"/>
<dbReference type="DMDM" id="166977703"/>
<dbReference type="jPOST" id="Q9ULR5"/>
<dbReference type="MassIVE" id="Q9ULR5"/>
<dbReference type="PaxDb" id="9606-ENSP00000244221"/>
<dbReference type="PeptideAtlas" id="Q9ULR5"/>
<dbReference type="ProteomicsDB" id="85101"/>
<dbReference type="Pumba" id="Q9ULR5"/>
<dbReference type="Antibodypedia" id="56903">
    <property type="antibodies" value="13 antibodies from 8 providers"/>
</dbReference>
<dbReference type="DNASU" id="400961"/>
<dbReference type="Ensembl" id="ENST00000244221.9">
    <property type="protein sequence ID" value="ENSP00000244221.8"/>
    <property type="gene ID" value="ENSG00000124374.9"/>
</dbReference>
<dbReference type="GeneID" id="400961"/>
<dbReference type="KEGG" id="hsa:400961"/>
<dbReference type="MANE-Select" id="ENST00000244221.9">
    <property type="protein sequence ID" value="ENSP00000244221.8"/>
    <property type="RefSeq nucleotide sequence ID" value="NM_020459.1"/>
    <property type="RefSeq protein sequence ID" value="NP_065192.1"/>
</dbReference>
<dbReference type="UCSC" id="uc002shu.3">
    <property type="organism name" value="human"/>
</dbReference>
<dbReference type="AGR" id="HGNC:29200"/>
<dbReference type="CTD" id="400961"/>
<dbReference type="DisGeNET" id="400961"/>
<dbReference type="GeneCards" id="PAIP2B"/>
<dbReference type="HGNC" id="HGNC:29200">
    <property type="gene designation" value="PAIP2B"/>
</dbReference>
<dbReference type="HPA" id="ENSG00000124374">
    <property type="expression patterns" value="Tissue enhanced (brain)"/>
</dbReference>
<dbReference type="MIM" id="611018">
    <property type="type" value="gene"/>
</dbReference>
<dbReference type="neXtProt" id="NX_Q9ULR5"/>
<dbReference type="OpenTargets" id="ENSG00000124374"/>
<dbReference type="PharmGKB" id="PA162398595"/>
<dbReference type="VEuPathDB" id="HostDB:ENSG00000124374"/>
<dbReference type="eggNOG" id="ENOG502S63Z">
    <property type="taxonomic scope" value="Eukaryota"/>
</dbReference>
<dbReference type="GeneTree" id="ENSGT00390000017284"/>
<dbReference type="HOGENOM" id="CLU_134152_0_0_1"/>
<dbReference type="InParanoid" id="Q9ULR5"/>
<dbReference type="OMA" id="EDKEWFI"/>
<dbReference type="OrthoDB" id="5985142at2759"/>
<dbReference type="PAN-GO" id="Q9ULR5">
    <property type="GO annotations" value="3 GO annotations based on evolutionary models"/>
</dbReference>
<dbReference type="PhylomeDB" id="Q9ULR5"/>
<dbReference type="TreeFam" id="TF326855"/>
<dbReference type="PathwayCommons" id="Q9ULR5"/>
<dbReference type="SignaLink" id="Q9ULR5"/>
<dbReference type="BioGRID-ORCS" id="400961">
    <property type="hits" value="5 hits in 1143 CRISPR screens"/>
</dbReference>
<dbReference type="ChiTaRS" id="PAIP2B">
    <property type="organism name" value="human"/>
</dbReference>
<dbReference type="GenomeRNAi" id="400961"/>
<dbReference type="Pharos" id="Q9ULR5">
    <property type="development level" value="Tbio"/>
</dbReference>
<dbReference type="PRO" id="PR:Q9ULR5"/>
<dbReference type="Proteomes" id="UP000005640">
    <property type="component" value="Chromosome 2"/>
</dbReference>
<dbReference type="RNAct" id="Q9ULR5">
    <property type="molecule type" value="protein"/>
</dbReference>
<dbReference type="Bgee" id="ENSG00000124374">
    <property type="expression patterns" value="Expressed in corpus callosum and 200 other cell types or tissues"/>
</dbReference>
<dbReference type="GO" id="GO:0005737">
    <property type="term" value="C:cytoplasm"/>
    <property type="evidence" value="ECO:0000318"/>
    <property type="project" value="GO_Central"/>
</dbReference>
<dbReference type="GO" id="GO:0000900">
    <property type="term" value="F:mRNA regulatory element binding translation repressor activity"/>
    <property type="evidence" value="ECO:0000314"/>
    <property type="project" value="HGNC-UCL"/>
</dbReference>
<dbReference type="GO" id="GO:0030371">
    <property type="term" value="F:translation repressor activity"/>
    <property type="evidence" value="ECO:0000318"/>
    <property type="project" value="GO_Central"/>
</dbReference>
<dbReference type="GO" id="GO:0017148">
    <property type="term" value="P:negative regulation of translation"/>
    <property type="evidence" value="ECO:0000318"/>
    <property type="project" value="GO_Central"/>
</dbReference>
<dbReference type="GO" id="GO:0045947">
    <property type="term" value="P:negative regulation of translational initiation"/>
    <property type="evidence" value="ECO:0000314"/>
    <property type="project" value="HGNC-UCL"/>
</dbReference>
<dbReference type="InterPro" id="IPR040396">
    <property type="entry name" value="PAIP2-like"/>
</dbReference>
<dbReference type="InterPro" id="IPR009818">
    <property type="entry name" value="PAM2_motif"/>
</dbReference>
<dbReference type="PANTHER" id="PTHR13154">
    <property type="entry name" value="POLYADENYLATE-BINDING PROTEIN-INTERACTING PROTEIN 2"/>
    <property type="match status" value="1"/>
</dbReference>
<dbReference type="PANTHER" id="PTHR13154:SF5">
    <property type="entry name" value="POLYADENYLATE-BINDING PROTEIN-INTERACTING PROTEIN 2B"/>
    <property type="match status" value="1"/>
</dbReference>
<dbReference type="Pfam" id="PF07145">
    <property type="entry name" value="PAM2"/>
    <property type="match status" value="1"/>
</dbReference>
<proteinExistence type="evidence at protein level"/>
<sequence>MNGSNMANTSPSVKSKEDQGLSGHDEKENPFAEYMWMENEEDFNRQVEEELQEQDFLDRCFQEMLDEEDQDWFIPSRDLPQAMGQLQQQLNGLSVSEGHDSEDILSKSNLNPDAKEFIPGEKY</sequence>